<keyword id="KW-0025">Alternative splicing</keyword>
<keyword id="KW-0966">Cell projection</keyword>
<keyword id="KW-0969">Cilium</keyword>
<keyword id="KW-0970">Cilium biogenesis/degradation</keyword>
<keyword id="KW-0175">Coiled coil</keyword>
<keyword id="KW-1185">Reference proteome</keyword>
<keyword id="KW-0677">Repeat</keyword>
<keyword id="KW-0802">TPR repeat</keyword>
<protein>
    <recommendedName>
        <fullName>Intraflagellar transport protein 70A</fullName>
    </recommendedName>
    <alternativeName>
        <fullName>Protein fleer</fullName>
    </alternativeName>
    <alternativeName>
        <fullName>Tetratricopeptide repeat protein 30A</fullName>
        <shortName>TPR repeat protein 30A</shortName>
    </alternativeName>
</protein>
<proteinExistence type="evidence at transcript level"/>
<sequence>MPPMTIKDGEYTATVYKMIKEGRYGDAIHILSKEHQKHTKSRAALSLLGYCYYHMQDFTNAAECYEQLTQLHPEVEDYKLYYAQSLYGACAFPEAMKSTFLLDNTTSHTKMIKLQAAIKYGEEDYSGAKTLVEQLPQEDPDYDVDLGCLLYKEGEFEEACKKFMSSMNVLGYQPDLAYNIALCYYSLKQYASALKYIAEIIERGIREHPELSIGMTTEGIDVRSVGNTLILHETALIEAFNLKAAIEYQLKNYAAAQEALTDMPPRSEEELDPVTLHNQALMNMDTKPTEGFEKLAFLLQQNPFPPVTFGNLLLLYCKYEYFDLAADVLAENAHLTYKFLTPYLYEFLDAMITCQTAPEEAFRKFDENAGKLTEQLRKVTKQVQEARHNRDDESLKKYVQDYDEVLEKYIPVLMAQAKIYWNRENYSMVEKIFHKSLEFCNEHDTWKLNVAHVLFMQDNKYKEAIGFYEPIVKKHYENILNVSAIVLANLCVSYIMTSQNEEAEELMRKIEKEEEQISYDDPDKKIFHLCIVNLVIGTLYCAKGNYDFGISRVIKSLEPYNKKLGTDTWFYAKRCFLSLLENMAKHMIMLRDSVVQECIQFLEHCELYGKDVLAIIEQPLEEDRMHIGKNTVTYESRLIKALFYEVTGWNE</sequence>
<feature type="chain" id="PRO_0000333206" description="Intraflagellar transport protein 70A">
    <location>
        <begin position="1"/>
        <end position="651"/>
    </location>
</feature>
<feature type="repeat" description="TPR 1">
    <location>
        <begin position="8"/>
        <end position="41"/>
    </location>
</feature>
<feature type="repeat" description="TPR 2">
    <location>
        <begin position="42"/>
        <end position="75"/>
    </location>
</feature>
<feature type="repeat" description="TPR 3">
    <location>
        <begin position="140"/>
        <end position="173"/>
    </location>
</feature>
<feature type="repeat" description="TPR 4">
    <location>
        <begin position="175"/>
        <end position="207"/>
    </location>
</feature>
<feature type="repeat" description="TPR 5">
    <location>
        <begin position="379"/>
        <end position="410"/>
    </location>
</feature>
<feature type="repeat" description="TPR 6">
    <location>
        <begin position="411"/>
        <end position="443"/>
    </location>
</feature>
<feature type="repeat" description="TPR 7">
    <location>
        <begin position="445"/>
        <end position="478"/>
    </location>
</feature>
<feature type="repeat" description="TPR 8">
    <location>
        <begin position="530"/>
        <end position="563"/>
    </location>
</feature>
<feature type="coiled-coil region" evidence="2">
    <location>
        <begin position="494"/>
        <end position="521"/>
    </location>
</feature>
<feature type="splice variant" id="VSP_033487" description="In isoform 2." evidence="4">
    <location>
        <begin position="379"/>
        <end position="382"/>
    </location>
</feature>
<feature type="splice variant" id="VSP_033488" description="In isoform 2." evidence="4">
    <original>TLYCAKGNYDFGISRVIKSL</original>
    <variation>LEQTHGSTVFSRCWKTWPST</variation>
    <location>
        <begin position="538"/>
        <end position="557"/>
    </location>
</feature>
<feature type="splice variant" id="VSP_033489" description="In isoform 2." evidence="4">
    <location>
        <begin position="558"/>
        <end position="651"/>
    </location>
</feature>
<feature type="sequence conflict" description="In Ref. 1; ABV08791." evidence="5" ref="1">
    <original>K</original>
    <variation>R</variation>
    <location>
        <position position="573"/>
    </location>
</feature>
<name>IT70A_DANRE</name>
<reference key="1">
    <citation type="journal article" date="2007" name="Mol. Biol. Cell">
        <title>The zebrafish fleer gene encodes an essential regulator of cilia tubulin polyglutamylation.</title>
        <authorList>
            <person name="Pathak N.H."/>
            <person name="Obara T."/>
            <person name="Mangos S."/>
            <person name="Liu Y."/>
            <person name="Drummond I.A."/>
        </authorList>
    </citation>
    <scope>NUCLEOTIDE SEQUENCE [MRNA] (ISOFORMS 1 AND 2)</scope>
    <scope>FUNCTION</scope>
    <scope>SUBCELLULAR LOCATION</scope>
    <scope>TISSUE SPECIFICITY</scope>
    <scope>DEVELOPMENTAL STAGE</scope>
</reference>
<reference key="2">
    <citation type="journal article" date="2013" name="Nature">
        <title>The zebrafish reference genome sequence and its relationship to the human genome.</title>
        <authorList>
            <person name="Howe K."/>
            <person name="Clark M.D."/>
            <person name="Torroja C.F."/>
            <person name="Torrance J."/>
            <person name="Berthelot C."/>
            <person name="Muffato M."/>
            <person name="Collins J.E."/>
            <person name="Humphray S."/>
            <person name="McLaren K."/>
            <person name="Matthews L."/>
            <person name="McLaren S."/>
            <person name="Sealy I."/>
            <person name="Caccamo M."/>
            <person name="Churcher C."/>
            <person name="Scott C."/>
            <person name="Barrett J.C."/>
            <person name="Koch R."/>
            <person name="Rauch G.J."/>
            <person name="White S."/>
            <person name="Chow W."/>
            <person name="Kilian B."/>
            <person name="Quintais L.T."/>
            <person name="Guerra-Assuncao J.A."/>
            <person name="Zhou Y."/>
            <person name="Gu Y."/>
            <person name="Yen J."/>
            <person name="Vogel J.H."/>
            <person name="Eyre T."/>
            <person name="Redmond S."/>
            <person name="Banerjee R."/>
            <person name="Chi J."/>
            <person name="Fu B."/>
            <person name="Langley E."/>
            <person name="Maguire S.F."/>
            <person name="Laird G.K."/>
            <person name="Lloyd D."/>
            <person name="Kenyon E."/>
            <person name="Donaldson S."/>
            <person name="Sehra H."/>
            <person name="Almeida-King J."/>
            <person name="Loveland J."/>
            <person name="Trevanion S."/>
            <person name="Jones M."/>
            <person name="Quail M."/>
            <person name="Willey D."/>
            <person name="Hunt A."/>
            <person name="Burton J."/>
            <person name="Sims S."/>
            <person name="McLay K."/>
            <person name="Plumb B."/>
            <person name="Davis J."/>
            <person name="Clee C."/>
            <person name="Oliver K."/>
            <person name="Clark R."/>
            <person name="Riddle C."/>
            <person name="Elliot D."/>
            <person name="Threadgold G."/>
            <person name="Harden G."/>
            <person name="Ware D."/>
            <person name="Begum S."/>
            <person name="Mortimore B."/>
            <person name="Kerry G."/>
            <person name="Heath P."/>
            <person name="Phillimore B."/>
            <person name="Tracey A."/>
            <person name="Corby N."/>
            <person name="Dunn M."/>
            <person name="Johnson C."/>
            <person name="Wood J."/>
            <person name="Clark S."/>
            <person name="Pelan S."/>
            <person name="Griffiths G."/>
            <person name="Smith M."/>
            <person name="Glithero R."/>
            <person name="Howden P."/>
            <person name="Barker N."/>
            <person name="Lloyd C."/>
            <person name="Stevens C."/>
            <person name="Harley J."/>
            <person name="Holt K."/>
            <person name="Panagiotidis G."/>
            <person name="Lovell J."/>
            <person name="Beasley H."/>
            <person name="Henderson C."/>
            <person name="Gordon D."/>
            <person name="Auger K."/>
            <person name="Wright D."/>
            <person name="Collins J."/>
            <person name="Raisen C."/>
            <person name="Dyer L."/>
            <person name="Leung K."/>
            <person name="Robertson L."/>
            <person name="Ambridge K."/>
            <person name="Leongamornlert D."/>
            <person name="McGuire S."/>
            <person name="Gilderthorp R."/>
            <person name="Griffiths C."/>
            <person name="Manthravadi D."/>
            <person name="Nichol S."/>
            <person name="Barker G."/>
            <person name="Whitehead S."/>
            <person name="Kay M."/>
            <person name="Brown J."/>
            <person name="Murnane C."/>
            <person name="Gray E."/>
            <person name="Humphries M."/>
            <person name="Sycamore N."/>
            <person name="Barker D."/>
            <person name="Saunders D."/>
            <person name="Wallis J."/>
            <person name="Babbage A."/>
            <person name="Hammond S."/>
            <person name="Mashreghi-Mohammadi M."/>
            <person name="Barr L."/>
            <person name="Martin S."/>
            <person name="Wray P."/>
            <person name="Ellington A."/>
            <person name="Matthews N."/>
            <person name="Ellwood M."/>
            <person name="Woodmansey R."/>
            <person name="Clark G."/>
            <person name="Cooper J."/>
            <person name="Tromans A."/>
            <person name="Grafham D."/>
            <person name="Skuce C."/>
            <person name="Pandian R."/>
            <person name="Andrews R."/>
            <person name="Harrison E."/>
            <person name="Kimberley A."/>
            <person name="Garnett J."/>
            <person name="Fosker N."/>
            <person name="Hall R."/>
            <person name="Garner P."/>
            <person name="Kelly D."/>
            <person name="Bird C."/>
            <person name="Palmer S."/>
            <person name="Gehring I."/>
            <person name="Berger A."/>
            <person name="Dooley C.M."/>
            <person name="Ersan-Urun Z."/>
            <person name="Eser C."/>
            <person name="Geiger H."/>
            <person name="Geisler M."/>
            <person name="Karotki L."/>
            <person name="Kirn A."/>
            <person name="Konantz J."/>
            <person name="Konantz M."/>
            <person name="Oberlander M."/>
            <person name="Rudolph-Geiger S."/>
            <person name="Teucke M."/>
            <person name="Lanz C."/>
            <person name="Raddatz G."/>
            <person name="Osoegawa K."/>
            <person name="Zhu B."/>
            <person name="Rapp A."/>
            <person name="Widaa S."/>
            <person name="Langford C."/>
            <person name="Yang F."/>
            <person name="Schuster S.C."/>
            <person name="Carter N.P."/>
            <person name="Harrow J."/>
            <person name="Ning Z."/>
            <person name="Herrero J."/>
            <person name="Searle S.M."/>
            <person name="Enright A."/>
            <person name="Geisler R."/>
            <person name="Plasterk R.H."/>
            <person name="Lee C."/>
            <person name="Westerfield M."/>
            <person name="de Jong P.J."/>
            <person name="Zon L.I."/>
            <person name="Postlethwait J.H."/>
            <person name="Nusslein-Volhard C."/>
            <person name="Hubbard T.J."/>
            <person name="Roest Crollius H."/>
            <person name="Rogers J."/>
            <person name="Stemple D.L."/>
        </authorList>
    </citation>
    <scope>NUCLEOTIDE SEQUENCE [LARGE SCALE GENOMIC DNA]</scope>
    <source>
        <strain>Tuebingen</strain>
    </source>
</reference>
<reference key="3">
    <citation type="submission" date="2008-04" db="EMBL/GenBank/DDBJ databases">
        <authorList>
            <consortium name="NIH - Zebrafish Gene Collection (ZGC) project"/>
        </authorList>
    </citation>
    <scope>NUCLEOTIDE SEQUENCE [LARGE SCALE MRNA] (ISOFORM 1)</scope>
</reference>
<comment type="function">
    <text evidence="1 3">Plays a role in anterograde intraflagellar transport (IFT), the process by which cilia precursors are transported from the base of the cilium to the site of their incorporation at the tip (By similarity). Required for polyglutamylation of axonemal tubulin, which is a prerequisite for correct assembly of cilia and for normal cilia beat amplitude. Does not seem to be required for neuronal microtubule polyglutamylation.</text>
</comment>
<comment type="subcellular location">
    <subcellularLocation>
        <location evidence="3">Cell projection</location>
        <location evidence="3">Cilium</location>
    </subcellularLocation>
</comment>
<comment type="alternative products">
    <event type="alternative splicing"/>
    <isoform>
        <id>A7YE96-1</id>
        <name>1</name>
        <sequence type="displayed"/>
    </isoform>
    <isoform>
        <id>A7YE96-2</id>
        <name>2</name>
        <name>flr_tv1</name>
        <sequence type="described" ref="VSP_033487 VSP_033488 VSP_033489"/>
    </isoform>
</comment>
<comment type="tissue specificity">
    <text evidence="3">Localizes to the cilia of many ciliated epithelial cell types including pronephric cells, olfactory placode, the brain ventricle and lateral line organs.</text>
</comment>
<comment type="developmental stage">
    <text evidence="3">Maternally expressed. First detected in Kupffer's vesicle of seven somite embryos and the lateral mesoderm of 11 somite embryos. By 24 to 30 hours post-fertilization (hpf), expression becomes widespread within the central nervous system and the pronephros and parallels the development of multiciliated cells. During later stages of larval development (54 hpf), expression continues throughout the pronephros and intensifies in the olfactory placode and lateral line organs.</text>
</comment>
<comment type="similarity">
    <text evidence="5">Belongs to the TTC30/dfy-1/fleer family.</text>
</comment>
<comment type="sequence caution" evidence="5">
    <conflict type="erroneous initiation">
        <sequence resource="EMBL-CDS" id="ABV08791"/>
    </conflict>
</comment>
<dbReference type="EMBL" id="EF653429">
    <property type="protein sequence ID" value="ABV08791.1"/>
    <property type="status" value="ALT_INIT"/>
    <property type="molecule type" value="mRNA"/>
</dbReference>
<dbReference type="EMBL" id="EU124003">
    <property type="protein sequence ID" value="ABV26099.1"/>
    <property type="molecule type" value="mRNA"/>
</dbReference>
<dbReference type="EMBL" id="BX510989">
    <property type="status" value="NOT_ANNOTATED_CDS"/>
    <property type="molecule type" value="Genomic_DNA"/>
</dbReference>
<dbReference type="EMBL" id="BC163912">
    <property type="protein sequence ID" value="AAI63912.1"/>
    <property type="molecule type" value="mRNA"/>
</dbReference>
<dbReference type="RefSeq" id="NP_001098119.2">
    <molecule id="A7YE96-1"/>
    <property type="nucleotide sequence ID" value="NM_001104649.2"/>
</dbReference>
<dbReference type="SMR" id="A7YE96"/>
<dbReference type="FunCoup" id="A7YE96">
    <property type="interactions" value="598"/>
</dbReference>
<dbReference type="STRING" id="7955.ENSDARP00000055421"/>
<dbReference type="PaxDb" id="7955-ENSDARP00000055421"/>
<dbReference type="PeptideAtlas" id="A7YE96"/>
<dbReference type="Ensembl" id="ENSDART00000055422">
    <molecule id="A7YE96-1"/>
    <property type="protein sequence ID" value="ENSDARP00000055421"/>
    <property type="gene ID" value="ENSDARG00000038024"/>
</dbReference>
<dbReference type="GeneID" id="797829"/>
<dbReference type="KEGG" id="dre:797829"/>
<dbReference type="AGR" id="ZFIN:ZDB-GENE-070117-2066"/>
<dbReference type="CTD" id="797829"/>
<dbReference type="ZFIN" id="ZDB-GENE-070117-2066">
    <property type="gene designation" value="ift70"/>
</dbReference>
<dbReference type="eggNOG" id="KOG4340">
    <property type="taxonomic scope" value="Eukaryota"/>
</dbReference>
<dbReference type="HOGENOM" id="CLU_023760_0_0_1"/>
<dbReference type="InParanoid" id="A7YE96"/>
<dbReference type="OrthoDB" id="10249577at2759"/>
<dbReference type="PhylomeDB" id="A7YE96"/>
<dbReference type="TreeFam" id="TF314592"/>
<dbReference type="PRO" id="PR:A7YE96"/>
<dbReference type="Proteomes" id="UP000000437">
    <property type="component" value="Chromosome 3"/>
</dbReference>
<dbReference type="Bgee" id="ENSDARG00000038024">
    <property type="expression patterns" value="Expressed in testis and 29 other cell types or tissues"/>
</dbReference>
<dbReference type="ExpressionAtlas" id="A7YE96">
    <property type="expression patterns" value="baseline and differential"/>
</dbReference>
<dbReference type="GO" id="GO:0005879">
    <property type="term" value="C:axonemal microtubule"/>
    <property type="evidence" value="ECO:0000314"/>
    <property type="project" value="UniProtKB"/>
</dbReference>
<dbReference type="GO" id="GO:0005929">
    <property type="term" value="C:cilium"/>
    <property type="evidence" value="ECO:0000314"/>
    <property type="project" value="UniProtKB"/>
</dbReference>
<dbReference type="GO" id="GO:0030992">
    <property type="term" value="C:intraciliary transport particle B"/>
    <property type="evidence" value="ECO:0000318"/>
    <property type="project" value="GO_Central"/>
</dbReference>
<dbReference type="GO" id="GO:0031514">
    <property type="term" value="C:motile cilium"/>
    <property type="evidence" value="ECO:0000314"/>
    <property type="project" value="ZFIN"/>
</dbReference>
<dbReference type="GO" id="GO:0120170">
    <property type="term" value="F:intraciliary transport particle B binding"/>
    <property type="evidence" value="ECO:0000318"/>
    <property type="project" value="GO_Central"/>
</dbReference>
<dbReference type="GO" id="GO:0070738">
    <property type="term" value="F:tubulin-glycine ligase activity"/>
    <property type="evidence" value="ECO:0000315"/>
    <property type="project" value="ZFIN"/>
</dbReference>
<dbReference type="GO" id="GO:0060271">
    <property type="term" value="P:cilium assembly"/>
    <property type="evidence" value="ECO:0000315"/>
    <property type="project" value="ZFIN"/>
</dbReference>
<dbReference type="GO" id="GO:0007368">
    <property type="term" value="P:determination of left/right symmetry"/>
    <property type="evidence" value="ECO:0000315"/>
    <property type="project" value="ZFIN"/>
</dbReference>
<dbReference type="GO" id="GO:0001736">
    <property type="term" value="P:establishment of planar polarity"/>
    <property type="evidence" value="ECO:0000316"/>
    <property type="project" value="ZFIN"/>
</dbReference>
<dbReference type="GO" id="GO:0042073">
    <property type="term" value="P:intraciliary transport"/>
    <property type="evidence" value="ECO:0000315"/>
    <property type="project" value="UniProtKB"/>
</dbReference>
<dbReference type="GO" id="GO:0036372">
    <property type="term" value="P:opsin transport"/>
    <property type="evidence" value="ECO:0000316"/>
    <property type="project" value="ZFIN"/>
</dbReference>
<dbReference type="GO" id="GO:0018095">
    <property type="term" value="P:protein polyglutamylation"/>
    <property type="evidence" value="ECO:0000315"/>
    <property type="project" value="UniProtKB"/>
</dbReference>
<dbReference type="FunFam" id="1.25.40.10:FF:000226">
    <property type="entry name" value="Tetratricopeptide repeat protein 30A"/>
    <property type="match status" value="1"/>
</dbReference>
<dbReference type="FunFam" id="1.25.40.10:FF:000211">
    <property type="entry name" value="tetratricopeptide repeat protein 30B"/>
    <property type="match status" value="1"/>
</dbReference>
<dbReference type="Gene3D" id="1.25.40.10">
    <property type="entry name" value="Tetratricopeptide repeat domain"/>
    <property type="match status" value="3"/>
</dbReference>
<dbReference type="InterPro" id="IPR011990">
    <property type="entry name" value="TPR-like_helical_dom_sf"/>
</dbReference>
<dbReference type="InterPro" id="IPR013105">
    <property type="entry name" value="TPR_2"/>
</dbReference>
<dbReference type="InterPro" id="IPR019734">
    <property type="entry name" value="TPR_rpt"/>
</dbReference>
<dbReference type="InterPro" id="IPR039941">
    <property type="entry name" value="TT30"/>
</dbReference>
<dbReference type="PANTHER" id="PTHR20931">
    <property type="entry name" value="TETRATRICOPEPTIDE REPEAT PROTEIN 30"/>
    <property type="match status" value="1"/>
</dbReference>
<dbReference type="PANTHER" id="PTHR20931:SF0">
    <property type="entry name" value="TETRATRICOPEPTIDE REPEAT PROTEIN 30"/>
    <property type="match status" value="1"/>
</dbReference>
<dbReference type="Pfam" id="PF07719">
    <property type="entry name" value="TPR_2"/>
    <property type="match status" value="1"/>
</dbReference>
<dbReference type="Pfam" id="PF13174">
    <property type="entry name" value="TPR_6"/>
    <property type="match status" value="1"/>
</dbReference>
<dbReference type="SMART" id="SM00028">
    <property type="entry name" value="TPR"/>
    <property type="match status" value="3"/>
</dbReference>
<dbReference type="SUPFAM" id="SSF48452">
    <property type="entry name" value="TPR-like"/>
    <property type="match status" value="2"/>
</dbReference>
<dbReference type="PROSITE" id="PS50005">
    <property type="entry name" value="TPR"/>
    <property type="match status" value="4"/>
</dbReference>
<dbReference type="PROSITE" id="PS50293">
    <property type="entry name" value="TPR_REGION"/>
    <property type="match status" value="3"/>
</dbReference>
<accession>A7YE96</accession>
<accession>A8CVX5</accession>
<accession>B3DKN4</accession>
<gene>
    <name type="primary">ift70a</name>
    <name type="synonym">flr</name>
    <name type="synonym">ttc30a</name>
</gene>
<evidence type="ECO:0000250" key="1"/>
<evidence type="ECO:0000255" key="2"/>
<evidence type="ECO:0000269" key="3">
    <source>
    </source>
</evidence>
<evidence type="ECO:0000303" key="4">
    <source>
    </source>
</evidence>
<evidence type="ECO:0000305" key="5"/>
<organism>
    <name type="scientific">Danio rerio</name>
    <name type="common">Zebrafish</name>
    <name type="synonym">Brachydanio rerio</name>
    <dbReference type="NCBI Taxonomy" id="7955"/>
    <lineage>
        <taxon>Eukaryota</taxon>
        <taxon>Metazoa</taxon>
        <taxon>Chordata</taxon>
        <taxon>Craniata</taxon>
        <taxon>Vertebrata</taxon>
        <taxon>Euteleostomi</taxon>
        <taxon>Actinopterygii</taxon>
        <taxon>Neopterygii</taxon>
        <taxon>Teleostei</taxon>
        <taxon>Ostariophysi</taxon>
        <taxon>Cypriniformes</taxon>
        <taxon>Danionidae</taxon>
        <taxon>Danioninae</taxon>
        <taxon>Danio</taxon>
    </lineage>
</organism>